<protein>
    <recommendedName>
        <fullName evidence="1">Phosphoenolpyruvate carboxykinase (ATP)</fullName>
        <shortName evidence="1">PCK</shortName>
        <shortName evidence="1">PEP carboxykinase</shortName>
        <shortName evidence="1">PEPCK</shortName>
        <ecNumber evidence="1">4.1.1.49</ecNumber>
    </recommendedName>
</protein>
<accession>A6QHX1</accession>
<dbReference type="EC" id="4.1.1.49" evidence="1"/>
<dbReference type="EMBL" id="AP009351">
    <property type="protein sequence ID" value="BAF67953.1"/>
    <property type="molecule type" value="Genomic_DNA"/>
</dbReference>
<dbReference type="RefSeq" id="WP_000109906.1">
    <property type="nucleotide sequence ID" value="NZ_JBBIAE010000017.1"/>
</dbReference>
<dbReference type="SMR" id="A6QHX1"/>
<dbReference type="KEGG" id="sae:NWMN_1681"/>
<dbReference type="HOGENOM" id="CLU_018247_0_1_9"/>
<dbReference type="UniPathway" id="UPA00138"/>
<dbReference type="Proteomes" id="UP000006386">
    <property type="component" value="Chromosome"/>
</dbReference>
<dbReference type="GO" id="GO:0005829">
    <property type="term" value="C:cytosol"/>
    <property type="evidence" value="ECO:0007669"/>
    <property type="project" value="TreeGrafter"/>
</dbReference>
<dbReference type="GO" id="GO:0005524">
    <property type="term" value="F:ATP binding"/>
    <property type="evidence" value="ECO:0007669"/>
    <property type="project" value="UniProtKB-UniRule"/>
</dbReference>
<dbReference type="GO" id="GO:0046872">
    <property type="term" value="F:metal ion binding"/>
    <property type="evidence" value="ECO:0007669"/>
    <property type="project" value="UniProtKB-KW"/>
</dbReference>
<dbReference type="GO" id="GO:0004612">
    <property type="term" value="F:phosphoenolpyruvate carboxykinase (ATP) activity"/>
    <property type="evidence" value="ECO:0007669"/>
    <property type="project" value="UniProtKB-UniRule"/>
</dbReference>
<dbReference type="GO" id="GO:0006094">
    <property type="term" value="P:gluconeogenesis"/>
    <property type="evidence" value="ECO:0007669"/>
    <property type="project" value="UniProtKB-UniRule"/>
</dbReference>
<dbReference type="CDD" id="cd00484">
    <property type="entry name" value="PEPCK_ATP"/>
    <property type="match status" value="1"/>
</dbReference>
<dbReference type="FunFam" id="2.170.8.10:FF:000001">
    <property type="entry name" value="Phosphoenolpyruvate carboxykinase (ATP)"/>
    <property type="match status" value="1"/>
</dbReference>
<dbReference type="FunFam" id="3.40.449.10:FF:000001">
    <property type="entry name" value="Phosphoenolpyruvate carboxykinase (ATP)"/>
    <property type="match status" value="1"/>
</dbReference>
<dbReference type="Gene3D" id="3.90.228.20">
    <property type="match status" value="1"/>
</dbReference>
<dbReference type="Gene3D" id="3.40.449.10">
    <property type="entry name" value="Phosphoenolpyruvate Carboxykinase, domain 1"/>
    <property type="match status" value="1"/>
</dbReference>
<dbReference type="Gene3D" id="2.170.8.10">
    <property type="entry name" value="Phosphoenolpyruvate Carboxykinase, domain 2"/>
    <property type="match status" value="1"/>
</dbReference>
<dbReference type="HAMAP" id="MF_00453">
    <property type="entry name" value="PEPCK_ATP"/>
    <property type="match status" value="1"/>
</dbReference>
<dbReference type="InterPro" id="IPR001272">
    <property type="entry name" value="PEP_carboxykinase_ATP"/>
</dbReference>
<dbReference type="InterPro" id="IPR013035">
    <property type="entry name" value="PEP_carboxykinase_C"/>
</dbReference>
<dbReference type="InterPro" id="IPR008210">
    <property type="entry name" value="PEP_carboxykinase_N"/>
</dbReference>
<dbReference type="InterPro" id="IPR015994">
    <property type="entry name" value="PEPCK_ATP_CS"/>
</dbReference>
<dbReference type="NCBIfam" id="TIGR00224">
    <property type="entry name" value="pckA"/>
    <property type="match status" value="1"/>
</dbReference>
<dbReference type="NCBIfam" id="NF006820">
    <property type="entry name" value="PRK09344.1-2"/>
    <property type="match status" value="1"/>
</dbReference>
<dbReference type="NCBIfam" id="NF006821">
    <property type="entry name" value="PRK09344.1-3"/>
    <property type="match status" value="1"/>
</dbReference>
<dbReference type="PANTHER" id="PTHR30031:SF0">
    <property type="entry name" value="PHOSPHOENOLPYRUVATE CARBOXYKINASE (ATP)"/>
    <property type="match status" value="1"/>
</dbReference>
<dbReference type="PANTHER" id="PTHR30031">
    <property type="entry name" value="PHOSPHOENOLPYRUVATE CARBOXYKINASE ATP"/>
    <property type="match status" value="1"/>
</dbReference>
<dbReference type="Pfam" id="PF01293">
    <property type="entry name" value="PEPCK_ATP"/>
    <property type="match status" value="1"/>
</dbReference>
<dbReference type="PIRSF" id="PIRSF006294">
    <property type="entry name" value="PEP_crbxkin"/>
    <property type="match status" value="1"/>
</dbReference>
<dbReference type="SUPFAM" id="SSF68923">
    <property type="entry name" value="PEP carboxykinase N-terminal domain"/>
    <property type="match status" value="1"/>
</dbReference>
<dbReference type="SUPFAM" id="SSF53795">
    <property type="entry name" value="PEP carboxykinase-like"/>
    <property type="match status" value="1"/>
</dbReference>
<dbReference type="PROSITE" id="PS00532">
    <property type="entry name" value="PEPCK_ATP"/>
    <property type="match status" value="1"/>
</dbReference>
<evidence type="ECO:0000255" key="1">
    <source>
        <dbReference type="HAMAP-Rule" id="MF_00453"/>
    </source>
</evidence>
<gene>
    <name evidence="1" type="primary">pckA</name>
    <name type="ordered locus">NWMN_1681</name>
</gene>
<feature type="chain" id="PRO_1000072375" description="Phosphoenolpyruvate carboxykinase (ATP)">
    <location>
        <begin position="1"/>
        <end position="530"/>
    </location>
</feature>
<feature type="binding site" evidence="1">
    <location>
        <position position="58"/>
    </location>
    <ligand>
        <name>substrate</name>
    </ligand>
</feature>
<feature type="binding site" evidence="1">
    <location>
        <position position="195"/>
    </location>
    <ligand>
        <name>substrate</name>
    </ligand>
</feature>
<feature type="binding site" evidence="1">
    <location>
        <position position="201"/>
    </location>
    <ligand>
        <name>ATP</name>
        <dbReference type="ChEBI" id="CHEBI:30616"/>
    </ligand>
</feature>
<feature type="binding site" evidence="1">
    <location>
        <position position="201"/>
    </location>
    <ligand>
        <name>Mn(2+)</name>
        <dbReference type="ChEBI" id="CHEBI:29035"/>
    </ligand>
</feature>
<feature type="binding site" evidence="1">
    <location>
        <position position="201"/>
    </location>
    <ligand>
        <name>substrate</name>
    </ligand>
</feature>
<feature type="binding site" evidence="1">
    <location>
        <position position="220"/>
    </location>
    <ligand>
        <name>ATP</name>
        <dbReference type="ChEBI" id="CHEBI:30616"/>
    </ligand>
</feature>
<feature type="binding site" evidence="1">
    <location>
        <position position="220"/>
    </location>
    <ligand>
        <name>Mn(2+)</name>
        <dbReference type="ChEBI" id="CHEBI:29035"/>
    </ligand>
</feature>
<feature type="binding site" evidence="1">
    <location>
        <begin position="236"/>
        <end position="244"/>
    </location>
    <ligand>
        <name>ATP</name>
        <dbReference type="ChEBI" id="CHEBI:30616"/>
    </ligand>
</feature>
<feature type="binding site" evidence="1">
    <location>
        <position position="257"/>
    </location>
    <ligand>
        <name>Mn(2+)</name>
        <dbReference type="ChEBI" id="CHEBI:29035"/>
    </ligand>
</feature>
<feature type="binding site" evidence="1">
    <location>
        <position position="285"/>
    </location>
    <ligand>
        <name>ATP</name>
        <dbReference type="ChEBI" id="CHEBI:30616"/>
    </ligand>
</feature>
<feature type="binding site" evidence="1">
    <location>
        <position position="321"/>
    </location>
    <ligand>
        <name>ATP</name>
        <dbReference type="ChEBI" id="CHEBI:30616"/>
    </ligand>
</feature>
<feature type="binding site" evidence="1">
    <location>
        <position position="321"/>
    </location>
    <ligand>
        <name>substrate</name>
    </ligand>
</feature>
<feature type="binding site" evidence="1">
    <location>
        <begin position="440"/>
        <end position="441"/>
    </location>
    <ligand>
        <name>ATP</name>
        <dbReference type="ChEBI" id="CHEBI:30616"/>
    </ligand>
</feature>
<feature type="binding site" evidence="1">
    <location>
        <position position="446"/>
    </location>
    <ligand>
        <name>ATP</name>
        <dbReference type="ChEBI" id="CHEBI:30616"/>
    </ligand>
</feature>
<name>PCKA_STAAE</name>
<keyword id="KW-0067">ATP-binding</keyword>
<keyword id="KW-0963">Cytoplasm</keyword>
<keyword id="KW-0210">Decarboxylase</keyword>
<keyword id="KW-0312">Gluconeogenesis</keyword>
<keyword id="KW-0456">Lyase</keyword>
<keyword id="KW-0464">Manganese</keyword>
<keyword id="KW-0479">Metal-binding</keyword>
<keyword id="KW-0547">Nucleotide-binding</keyword>
<reference key="1">
    <citation type="journal article" date="2008" name="J. Bacteriol.">
        <title>Genome sequence of Staphylococcus aureus strain Newman and comparative analysis of staphylococcal genomes: polymorphism and evolution of two major pathogenicity islands.</title>
        <authorList>
            <person name="Baba T."/>
            <person name="Bae T."/>
            <person name="Schneewind O."/>
            <person name="Takeuchi F."/>
            <person name="Hiramatsu K."/>
        </authorList>
    </citation>
    <scope>NUCLEOTIDE SEQUENCE [LARGE SCALE GENOMIC DNA]</scope>
    <source>
        <strain>Newman</strain>
    </source>
</reference>
<organism>
    <name type="scientific">Staphylococcus aureus (strain Newman)</name>
    <dbReference type="NCBI Taxonomy" id="426430"/>
    <lineage>
        <taxon>Bacteria</taxon>
        <taxon>Bacillati</taxon>
        <taxon>Bacillota</taxon>
        <taxon>Bacilli</taxon>
        <taxon>Bacillales</taxon>
        <taxon>Staphylococcaceae</taxon>
        <taxon>Staphylococcus</taxon>
    </lineage>
</organism>
<proteinExistence type="inferred from homology"/>
<sequence length="530" mass="59377">MSVDTYTETTKIDKLLKKPTSHFQLSTTQLYNKILDNNEGVLTELGAVNASTGKYTGRSPKDKFFVSEPSYRDNIDWGEINQPIDEETFLKLYHKVLDYLDKKDELYVFKGYAGSDKDTMLKLTVINELAWHNLFAKNMFIRPESKEEATKIKPNFTIVSAPHFKADPEVDGTKSETFVIISFKHKVILIGGTEYAGEMKKGIFSVMNYLLPMQDIMSMHCSANVGEKGDVALFFGLSGTGKTTLSADPHRKLIGDDEHGWNKNGVFNIEGGCYAKAINLSKEKEPQIFDAIKYGAILENTVVAEDGSVDFEDNRYTENTRAAYPINHIDNIVVPSKAAHPNTIIFLTADAFGVIPPISKLNKDQAMYHFLSGFTSKLAGTERGVTEPEPSFSTCFGAPFFPLHPTVYADLLGELIDLHDVDVYLVNTGWTGGKYGVGRRISLHYTRQMVNQAISGKLKNAEYTKDSTFGLSIPVEIEDVPKTILNPINAWSDKEKYKAQAEDLIQRFEKNFEKFGEKVEHIAEKGSFNK</sequence>
<comment type="function">
    <text evidence="1">Involved in the gluconeogenesis. Catalyzes the conversion of oxaloacetate (OAA) to phosphoenolpyruvate (PEP) through direct phosphoryl transfer between the nucleoside triphosphate and OAA.</text>
</comment>
<comment type="catalytic activity">
    <reaction evidence="1">
        <text>oxaloacetate + ATP = phosphoenolpyruvate + ADP + CO2</text>
        <dbReference type="Rhea" id="RHEA:18617"/>
        <dbReference type="ChEBI" id="CHEBI:16452"/>
        <dbReference type="ChEBI" id="CHEBI:16526"/>
        <dbReference type="ChEBI" id="CHEBI:30616"/>
        <dbReference type="ChEBI" id="CHEBI:58702"/>
        <dbReference type="ChEBI" id="CHEBI:456216"/>
        <dbReference type="EC" id="4.1.1.49"/>
    </reaction>
</comment>
<comment type="cofactor">
    <cofactor evidence="1">
        <name>Mn(2+)</name>
        <dbReference type="ChEBI" id="CHEBI:29035"/>
    </cofactor>
    <text evidence="1">Binds 1 Mn(2+) ion per subunit.</text>
</comment>
<comment type="pathway">
    <text evidence="1">Carbohydrate biosynthesis; gluconeogenesis.</text>
</comment>
<comment type="subcellular location">
    <subcellularLocation>
        <location evidence="1">Cytoplasm</location>
    </subcellularLocation>
</comment>
<comment type="similarity">
    <text evidence="1">Belongs to the phosphoenolpyruvate carboxykinase (ATP) family.</text>
</comment>